<dbReference type="EC" id="2.1.1.191" evidence="1"/>
<dbReference type="EMBL" id="AM933173">
    <property type="protein sequence ID" value="CAR36860.1"/>
    <property type="molecule type" value="Genomic_DNA"/>
</dbReference>
<dbReference type="RefSeq" id="WP_000140477.1">
    <property type="nucleotide sequence ID" value="NC_011274.1"/>
</dbReference>
<dbReference type="SMR" id="B5R6D3"/>
<dbReference type="KEGG" id="seg:SG0970"/>
<dbReference type="HOGENOM" id="CLU_014042_0_0_6"/>
<dbReference type="Proteomes" id="UP000008321">
    <property type="component" value="Chromosome"/>
</dbReference>
<dbReference type="GO" id="GO:0005737">
    <property type="term" value="C:cytoplasm"/>
    <property type="evidence" value="ECO:0007669"/>
    <property type="project" value="UniProtKB-SubCell"/>
</dbReference>
<dbReference type="GO" id="GO:0003723">
    <property type="term" value="F:RNA binding"/>
    <property type="evidence" value="ECO:0007669"/>
    <property type="project" value="UniProtKB-KW"/>
</dbReference>
<dbReference type="GO" id="GO:0016434">
    <property type="term" value="F:rRNA (cytosine) methyltransferase activity"/>
    <property type="evidence" value="ECO:0007669"/>
    <property type="project" value="UniProtKB-UniRule"/>
</dbReference>
<dbReference type="CDD" id="cd02440">
    <property type="entry name" value="AdoMet_MTases"/>
    <property type="match status" value="1"/>
</dbReference>
<dbReference type="CDD" id="cd21153">
    <property type="entry name" value="PUA_RlmI"/>
    <property type="match status" value="1"/>
</dbReference>
<dbReference type="CDD" id="cd11572">
    <property type="entry name" value="RlmI_M_like"/>
    <property type="match status" value="1"/>
</dbReference>
<dbReference type="FunFam" id="3.40.50.150:FF:000044">
    <property type="entry name" value="Ribosomal RNA large subunit methyltransferase I"/>
    <property type="match status" value="1"/>
</dbReference>
<dbReference type="Gene3D" id="2.30.130.10">
    <property type="entry name" value="PUA domain"/>
    <property type="match status" value="1"/>
</dbReference>
<dbReference type="Gene3D" id="3.30.750.80">
    <property type="entry name" value="RNA methyltransferase domain (HRMD) like"/>
    <property type="match status" value="1"/>
</dbReference>
<dbReference type="Gene3D" id="3.40.50.150">
    <property type="entry name" value="Vaccinia Virus protein VP39"/>
    <property type="match status" value="1"/>
</dbReference>
<dbReference type="HAMAP" id="MF_01857">
    <property type="entry name" value="23SrRNA_methyltr_I"/>
    <property type="match status" value="1"/>
</dbReference>
<dbReference type="InterPro" id="IPR002478">
    <property type="entry name" value="PUA"/>
</dbReference>
<dbReference type="InterPro" id="IPR015947">
    <property type="entry name" value="PUA-like_sf"/>
</dbReference>
<dbReference type="InterPro" id="IPR036974">
    <property type="entry name" value="PUA_sf"/>
</dbReference>
<dbReference type="InterPro" id="IPR023542">
    <property type="entry name" value="RLMI"/>
</dbReference>
<dbReference type="InterPro" id="IPR041532">
    <property type="entry name" value="RlmI-like_PUA"/>
</dbReference>
<dbReference type="InterPro" id="IPR019614">
    <property type="entry name" value="SAM-dep_methyl-trfase"/>
</dbReference>
<dbReference type="InterPro" id="IPR029063">
    <property type="entry name" value="SAM-dependent_MTases_sf"/>
</dbReference>
<dbReference type="NCBIfam" id="NF011707">
    <property type="entry name" value="PRK15128.1"/>
    <property type="match status" value="1"/>
</dbReference>
<dbReference type="PANTHER" id="PTHR42873">
    <property type="entry name" value="RIBOSOMAL RNA LARGE SUBUNIT METHYLTRANSFERASE"/>
    <property type="match status" value="1"/>
</dbReference>
<dbReference type="PANTHER" id="PTHR42873:SF1">
    <property type="entry name" value="S-ADENOSYLMETHIONINE-DEPENDENT METHYLTRANSFERASE DOMAIN-CONTAINING PROTEIN"/>
    <property type="match status" value="1"/>
</dbReference>
<dbReference type="Pfam" id="PF10672">
    <property type="entry name" value="Methyltrans_SAM"/>
    <property type="match status" value="1"/>
</dbReference>
<dbReference type="Pfam" id="PF17785">
    <property type="entry name" value="PUA_3"/>
    <property type="match status" value="1"/>
</dbReference>
<dbReference type="SMART" id="SM00359">
    <property type="entry name" value="PUA"/>
    <property type="match status" value="1"/>
</dbReference>
<dbReference type="SUPFAM" id="SSF88697">
    <property type="entry name" value="PUA domain-like"/>
    <property type="match status" value="1"/>
</dbReference>
<dbReference type="SUPFAM" id="SSF53335">
    <property type="entry name" value="S-adenosyl-L-methionine-dependent methyltransferases"/>
    <property type="match status" value="1"/>
</dbReference>
<dbReference type="PROSITE" id="PS50890">
    <property type="entry name" value="PUA"/>
    <property type="match status" value="1"/>
</dbReference>
<name>RLMI_SALG2</name>
<organism>
    <name type="scientific">Salmonella gallinarum (strain 287/91 / NCTC 13346)</name>
    <dbReference type="NCBI Taxonomy" id="550538"/>
    <lineage>
        <taxon>Bacteria</taxon>
        <taxon>Pseudomonadati</taxon>
        <taxon>Pseudomonadota</taxon>
        <taxon>Gammaproteobacteria</taxon>
        <taxon>Enterobacterales</taxon>
        <taxon>Enterobacteriaceae</taxon>
        <taxon>Salmonella</taxon>
    </lineage>
</organism>
<gene>
    <name evidence="1" type="primary">rlmI</name>
    <name type="ordered locus">SG0970</name>
</gene>
<evidence type="ECO:0000255" key="1">
    <source>
        <dbReference type="HAMAP-Rule" id="MF_01857"/>
    </source>
</evidence>
<comment type="function">
    <text evidence="1">Specifically methylates the cytosine at position 1962 (m5C1962) of 23S rRNA.</text>
</comment>
<comment type="catalytic activity">
    <reaction evidence="1">
        <text>cytidine(1962) in 23S rRNA + S-adenosyl-L-methionine = 5-methylcytidine(1962) in 23S rRNA + S-adenosyl-L-homocysteine + H(+)</text>
        <dbReference type="Rhea" id="RHEA:42912"/>
        <dbReference type="Rhea" id="RHEA-COMP:10382"/>
        <dbReference type="Rhea" id="RHEA-COMP:10386"/>
        <dbReference type="ChEBI" id="CHEBI:15378"/>
        <dbReference type="ChEBI" id="CHEBI:57856"/>
        <dbReference type="ChEBI" id="CHEBI:59789"/>
        <dbReference type="ChEBI" id="CHEBI:74483"/>
        <dbReference type="ChEBI" id="CHEBI:82748"/>
        <dbReference type="EC" id="2.1.1.191"/>
    </reaction>
</comment>
<comment type="subcellular location">
    <subcellularLocation>
        <location evidence="1">Cytoplasm</location>
    </subcellularLocation>
</comment>
<comment type="similarity">
    <text evidence="1">Belongs to the methyltransferase superfamily. RlmI family.</text>
</comment>
<accession>B5R6D3</accession>
<reference key="1">
    <citation type="journal article" date="2008" name="Genome Res.">
        <title>Comparative genome analysis of Salmonella enteritidis PT4 and Salmonella gallinarum 287/91 provides insights into evolutionary and host adaptation pathways.</title>
        <authorList>
            <person name="Thomson N.R."/>
            <person name="Clayton D.J."/>
            <person name="Windhorst D."/>
            <person name="Vernikos G."/>
            <person name="Davidson S."/>
            <person name="Churcher C."/>
            <person name="Quail M.A."/>
            <person name="Stevens M."/>
            <person name="Jones M.A."/>
            <person name="Watson M."/>
            <person name="Barron A."/>
            <person name="Layton A."/>
            <person name="Pickard D."/>
            <person name="Kingsley R.A."/>
            <person name="Bignell A."/>
            <person name="Clark L."/>
            <person name="Harris B."/>
            <person name="Ormond D."/>
            <person name="Abdellah Z."/>
            <person name="Brooks K."/>
            <person name="Cherevach I."/>
            <person name="Chillingworth T."/>
            <person name="Woodward J."/>
            <person name="Norberczak H."/>
            <person name="Lord A."/>
            <person name="Arrowsmith C."/>
            <person name="Jagels K."/>
            <person name="Moule S."/>
            <person name="Mungall K."/>
            <person name="Saunders M."/>
            <person name="Whitehead S."/>
            <person name="Chabalgoity J.A."/>
            <person name="Maskell D."/>
            <person name="Humphreys T."/>
            <person name="Roberts M."/>
            <person name="Barrow P.A."/>
            <person name="Dougan G."/>
            <person name="Parkhill J."/>
        </authorList>
    </citation>
    <scope>NUCLEOTIDE SEQUENCE [LARGE SCALE GENOMIC DNA]</scope>
    <source>
        <strain>287/91 / NCTC 13346</strain>
    </source>
</reference>
<feature type="chain" id="PRO_0000366244" description="Ribosomal RNA large subunit methyltransferase I">
    <location>
        <begin position="1"/>
        <end position="403"/>
    </location>
</feature>
<feature type="domain" description="PUA" evidence="1">
    <location>
        <begin position="9"/>
        <end position="86"/>
    </location>
</feature>
<protein>
    <recommendedName>
        <fullName evidence="1">Ribosomal RNA large subunit methyltransferase I</fullName>
        <ecNumber evidence="1">2.1.1.191</ecNumber>
    </recommendedName>
    <alternativeName>
        <fullName evidence="1">23S rRNA m5C1962 methyltransferase</fullName>
    </alternativeName>
    <alternativeName>
        <fullName evidence="1">rRNA (cytosine-C(5)-)-methyltransferase RlmI</fullName>
    </alternativeName>
</protein>
<sequence length="403" mass="45109">MTESTFPQYPRLVLSKGREKSLLRRHPWVFSGAVSRLEGKANLGETIDIVDHQGKWLARGAWSPASQIRARVWTFDKAESIDIAFFTHRLRQAQQWRDWLAKKDGLDSYRLIAGESDGLPGVTIDRFGHFLVLQLLSAGAEYQRAALISALQTCDPDCAIYDRSDVAVRKKEGMALTQGPVTGELPPALLPIEEHGMKLLVDIQGGHKTGYYLDQRDSRLATRRYVENQRVLNCFSYTGGFAVSALMGGCRQVVSVDTSQDALDIARQNVELNQLDLSKAEFVRDDVFKLLRAYREHGEKFDVIIMDPPKFVENKSQLMGACRGYKDINMLAIQLLNPGGILLTFSCSGLMTSDLFQKIIADAAIDAGRDVQFIEQFRQAADHPVIATYPEGLYLKGFACRVM</sequence>
<proteinExistence type="inferred from homology"/>
<keyword id="KW-0963">Cytoplasm</keyword>
<keyword id="KW-0489">Methyltransferase</keyword>
<keyword id="KW-0694">RNA-binding</keyword>
<keyword id="KW-0698">rRNA processing</keyword>
<keyword id="KW-0949">S-adenosyl-L-methionine</keyword>
<keyword id="KW-0808">Transferase</keyword>